<feature type="chain" id="PRO_0000445223" description="5,5'-dehydrodivanillate O-demethylase oxygenase subunit">
    <location>
        <begin position="1"/>
        <end position="424"/>
    </location>
</feature>
<feature type="domain" description="Rieske" evidence="2">
    <location>
        <begin position="27"/>
        <end position="135"/>
    </location>
</feature>
<feature type="binding site" evidence="2">
    <location>
        <position position="68"/>
    </location>
    <ligand>
        <name>[2Fe-2S] cluster</name>
        <dbReference type="ChEBI" id="CHEBI:190135"/>
    </ligand>
</feature>
<feature type="binding site" evidence="2">
    <location>
        <position position="70"/>
    </location>
    <ligand>
        <name>[2Fe-2S] cluster</name>
        <dbReference type="ChEBI" id="CHEBI:190135"/>
    </ligand>
</feature>
<feature type="binding site" evidence="2">
    <location>
        <position position="87"/>
    </location>
    <ligand>
        <name>[2Fe-2S] cluster</name>
        <dbReference type="ChEBI" id="CHEBI:190135"/>
    </ligand>
</feature>
<feature type="binding site" evidence="2">
    <location>
        <position position="90"/>
    </location>
    <ligand>
        <name>[2Fe-2S] cluster</name>
        <dbReference type="ChEBI" id="CHEBI:190135"/>
    </ligand>
</feature>
<feature type="binding site" evidence="1">
    <location>
        <position position="181"/>
    </location>
    <ligand>
        <name>Fe cation</name>
        <dbReference type="ChEBI" id="CHEBI:24875"/>
    </ligand>
</feature>
<feature type="binding site" evidence="1">
    <location>
        <position position="186"/>
    </location>
    <ligand>
        <name>Fe cation</name>
        <dbReference type="ChEBI" id="CHEBI:24875"/>
    </ligand>
</feature>
<feature type="binding site" evidence="1">
    <location>
        <position position="306"/>
    </location>
    <ligand>
        <name>Fe cation</name>
        <dbReference type="ChEBI" id="CHEBI:24875"/>
    </ligand>
</feature>
<feature type="sequence conflict" description="In Ref. 1; BAA36168." evidence="7" ref="1">
    <original>LGGLLWAYMGPLPAPELPDWE</original>
    <variation>WGAFSGPIWAPPRAQTADWA</variation>
    <location>
        <begin position="129"/>
        <end position="149"/>
    </location>
</feature>
<feature type="sequence conflict" description="In Ref. 1; BAA36168." evidence="7" ref="1">
    <original>RVPRDAEPYVQESIPVWHGPIKDAQGEWITSHV</original>
    <variation>PCRAMPSPMCRSPSPSGMARSRTRKASGSPAM</variation>
    <location>
        <begin position="270"/>
        <end position="302"/>
    </location>
</feature>
<feature type="sequence conflict" description="In Ref. 1; BAA36168." evidence="7" ref="1">
    <original>T</original>
    <variation>N</variation>
    <location>
        <position position="315"/>
    </location>
</feature>
<feature type="sequence conflict" description="In Ref. 1; BAA36168." evidence="7" ref="1">
    <original>D</original>
    <variation>H</variation>
    <location>
        <position position="357"/>
    </location>
</feature>
<keyword id="KW-0001">2Fe-2S</keyword>
<keyword id="KW-0408">Iron</keyword>
<keyword id="KW-0411">Iron-sulfur</keyword>
<keyword id="KW-0479">Metal-binding</keyword>
<keyword id="KW-0503">Monooxygenase</keyword>
<keyword id="KW-0520">NAD</keyword>
<keyword id="KW-0560">Oxidoreductase</keyword>
<keyword id="KW-1185">Reference proteome</keyword>
<comment type="function">
    <text evidence="3 4">Involved in the catabolism of 5,5'-dehydrodivanillate (DDVA), an intermediate in the biodegradation of lignin. Part of a three-component monooxygenase that catalyzes the O-demethylation of DDVA, leading to the formation of 2,2',3-trihydroxy-3'-methoxy-5,5'-dicarboxybiphenyl (OH-DDVA).</text>
</comment>
<comment type="catalytic activity">
    <reaction evidence="4">
        <text>5,5'-dehydrodivanillate + NADH + O2 + H(+) = 2,2',3-trihydroxy-3'-methoxy-5,5'-dicarboxybiphenyl + formaldehyde + NAD(+) + H2O</text>
        <dbReference type="Rhea" id="RHEA:57008"/>
        <dbReference type="ChEBI" id="CHEBI:15377"/>
        <dbReference type="ChEBI" id="CHEBI:15378"/>
        <dbReference type="ChEBI" id="CHEBI:15379"/>
        <dbReference type="ChEBI" id="CHEBI:16842"/>
        <dbReference type="ChEBI" id="CHEBI:57540"/>
        <dbReference type="ChEBI" id="CHEBI:57945"/>
        <dbReference type="ChEBI" id="CHEBI:141401"/>
        <dbReference type="ChEBI" id="CHEBI:141402"/>
    </reaction>
</comment>
<comment type="cofactor">
    <cofactor evidence="2">
        <name>[2Fe-2S] cluster</name>
        <dbReference type="ChEBI" id="CHEBI:190135"/>
    </cofactor>
    <text evidence="2">Binds 1 [2Fe-2S] cluster per subunit.</text>
</comment>
<comment type="cofactor">
    <cofactor evidence="1 8">
        <name>Fe cation</name>
        <dbReference type="ChEBI" id="CHEBI:24875"/>
    </cofactor>
    <text evidence="1">Binds 1 Fe cation.</text>
</comment>
<comment type="biophysicochemical properties">
    <phDependence>
        <text evidence="4">Optimum pH is 6.0.</text>
    </phDependence>
    <temperatureDependence>
        <text evidence="4">Optimum temperature is 25-30 degrees Celsius.</text>
    </temperatureDependence>
</comment>
<comment type="subunit">
    <text evidence="4">Homotrimer. The three-component monooxygenase is composed of an oxygenase (LigXa), a ferredoxin (LigXc) and a ferredoxin reductase (LigXd).</text>
</comment>
<comment type="disruption phenotype">
    <text evidence="3 4">Mutant can degrade syringate and vanillate, but not DDVA. It lacks DDVA O demethylation activity (PubMed:10788391). It cannot grow on minimal medium containing DDVA (PubMed:25217011).</text>
</comment>
<comment type="similarity">
    <text evidence="7">Belongs to the bacterial ring-hydroxylating dioxygenase alpha subunit family.</text>
</comment>
<organism>
    <name type="scientific">Sphingobium sp. (strain NBRC 103272 / SYK-6)</name>
    <dbReference type="NCBI Taxonomy" id="627192"/>
    <lineage>
        <taxon>Bacteria</taxon>
        <taxon>Pseudomonadati</taxon>
        <taxon>Pseudomonadota</taxon>
        <taxon>Alphaproteobacteria</taxon>
        <taxon>Sphingomonadales</taxon>
        <taxon>Sphingomonadaceae</taxon>
        <taxon>Sphingobium</taxon>
    </lineage>
</organism>
<gene>
    <name evidence="6" type="primary">ligXa</name>
    <name evidence="5" type="synonym">ligX</name>
    <name evidence="9" type="ORF">SLG_07770</name>
</gene>
<dbReference type="EC" id="1.14.13.-" evidence="4"/>
<dbReference type="EMBL" id="AB021319">
    <property type="protein sequence ID" value="BAA36168.1"/>
    <property type="molecule type" value="Genomic_DNA"/>
</dbReference>
<dbReference type="EMBL" id="AP012222">
    <property type="protein sequence ID" value="BAK65452.1"/>
    <property type="molecule type" value="Genomic_DNA"/>
</dbReference>
<dbReference type="RefSeq" id="WP_014075103.1">
    <property type="nucleotide sequence ID" value="NC_015976.1"/>
</dbReference>
<dbReference type="SMR" id="G2IN04"/>
<dbReference type="STRING" id="627192.SLG_07770"/>
<dbReference type="KEGG" id="ssy:SLG_07770"/>
<dbReference type="eggNOG" id="COG4638">
    <property type="taxonomic scope" value="Bacteria"/>
</dbReference>
<dbReference type="HOGENOM" id="CLU_039484_2_1_5"/>
<dbReference type="OrthoDB" id="9800776at2"/>
<dbReference type="Proteomes" id="UP000001275">
    <property type="component" value="Chromosome"/>
</dbReference>
<dbReference type="GO" id="GO:0051537">
    <property type="term" value="F:2 iron, 2 sulfur cluster binding"/>
    <property type="evidence" value="ECO:0007669"/>
    <property type="project" value="UniProtKB-KW"/>
</dbReference>
<dbReference type="GO" id="GO:0005506">
    <property type="term" value="F:iron ion binding"/>
    <property type="evidence" value="ECO:0007669"/>
    <property type="project" value="InterPro"/>
</dbReference>
<dbReference type="GO" id="GO:0004497">
    <property type="term" value="F:monooxygenase activity"/>
    <property type="evidence" value="ECO:0007669"/>
    <property type="project" value="UniProtKB-KW"/>
</dbReference>
<dbReference type="CDD" id="cd08878">
    <property type="entry name" value="RHO_alpha_C_DMO-like"/>
    <property type="match status" value="1"/>
</dbReference>
<dbReference type="Gene3D" id="3.90.380.10">
    <property type="entry name" value="Naphthalene 1,2-dioxygenase Alpha Subunit, Chain A, domain 1"/>
    <property type="match status" value="1"/>
</dbReference>
<dbReference type="Gene3D" id="2.102.10.10">
    <property type="entry name" value="Rieske [2Fe-2S] iron-sulphur domain"/>
    <property type="match status" value="1"/>
</dbReference>
<dbReference type="InterPro" id="IPR050584">
    <property type="entry name" value="Cholesterol_7-desaturase"/>
</dbReference>
<dbReference type="InterPro" id="IPR045623">
    <property type="entry name" value="LigXa_C"/>
</dbReference>
<dbReference type="InterPro" id="IPR017941">
    <property type="entry name" value="Rieske_2Fe-2S"/>
</dbReference>
<dbReference type="InterPro" id="IPR036922">
    <property type="entry name" value="Rieske_2Fe-2S_sf"/>
</dbReference>
<dbReference type="InterPro" id="IPR015881">
    <property type="entry name" value="Ring-hydroxy_dOase_2Fe2S_BS"/>
</dbReference>
<dbReference type="PANTHER" id="PTHR21266:SF59">
    <property type="entry name" value="BLR4922 PROTEIN"/>
    <property type="match status" value="1"/>
</dbReference>
<dbReference type="PANTHER" id="PTHR21266">
    <property type="entry name" value="IRON-SULFUR DOMAIN CONTAINING PROTEIN"/>
    <property type="match status" value="1"/>
</dbReference>
<dbReference type="Pfam" id="PF19301">
    <property type="entry name" value="LigXa_C"/>
    <property type="match status" value="1"/>
</dbReference>
<dbReference type="Pfam" id="PF00355">
    <property type="entry name" value="Rieske"/>
    <property type="match status" value="1"/>
</dbReference>
<dbReference type="SUPFAM" id="SSF55961">
    <property type="entry name" value="Bet v1-like"/>
    <property type="match status" value="1"/>
</dbReference>
<dbReference type="SUPFAM" id="SSF50022">
    <property type="entry name" value="ISP domain"/>
    <property type="match status" value="1"/>
</dbReference>
<dbReference type="PROSITE" id="PS51296">
    <property type="entry name" value="RIESKE"/>
    <property type="match status" value="1"/>
</dbReference>
<dbReference type="PROSITE" id="PS00570">
    <property type="entry name" value="RING_HYDROXYL_ALPHA"/>
    <property type="match status" value="1"/>
</dbReference>
<sequence>MLSAEQNDKLARVGPGTPMGELLRRYWHPIGGESEFETKATRPVRLMGEDLVLYKDLSGNYGLMDRHCPHRRADMACGMVEADGLRCSYHGWMFDAQGACTEQPFEDTANPKGRYKDKVRIKAYPVRALGGLLWAYMGPLPAPELPDWEPFSWKNGFRQIVISVLPCNWLQGQENSMDPIHFEWMHANWSKRLRGETGPYGPKHLKIDFREYDYGFTYNRIREDTDETNPLWTIGRACLWPNAMFTGDHFEYRVPIDDETMMSVGWFFTRVPRDAEPYVQESIPVWHGPIKDAQGEWITSHVMNQDFVAWIGQGTISDRTQENLGLSDKGIGMMRRQFLRDMEKISRGEDPKAIIRDPAINKAIPLPTIHRDAVMEGMTAEEIEAGGALHLKRFIFQYGQPEHVLKMQQDAMRISQDNKGYVDA</sequence>
<name>LIGXA_SPHSK</name>
<proteinExistence type="evidence at protein level"/>
<reference key="1">
    <citation type="journal article" date="2000" name="Appl. Environ. Microbiol.">
        <title>Coexistence of two different O demethylation systems in lignin metabolism by Sphingomonas paucimobilis SYK-6: cloning and sequencing of the lignin biphenyl-specific O-demethylase (LigX) gene.</title>
        <authorList>
            <person name="Sonoki T."/>
            <person name="Obi T."/>
            <person name="Kubota S."/>
            <person name="Higashi M."/>
            <person name="Masai E."/>
            <person name="Katayama Y."/>
        </authorList>
    </citation>
    <scope>NUCLEOTIDE SEQUENCE [GENOMIC DNA]</scope>
    <scope>FUNCTION</scope>
    <scope>DISRUPTION PHENOTYPE</scope>
    <source>
        <strain>NBRC 103272 / SYK-6</strain>
    </source>
</reference>
<reference key="2">
    <citation type="journal article" date="2012" name="J. Bacteriol.">
        <title>Complete genome sequence of Sphingobium sp. strain SYK-6, a degrader of lignin-derived biaryls and monoaryls.</title>
        <authorList>
            <person name="Masai E."/>
            <person name="Kamimura N."/>
            <person name="Kasai D."/>
            <person name="Oguchi A."/>
            <person name="Ankai A."/>
            <person name="Fukui S."/>
            <person name="Takahashi M."/>
            <person name="Yashiro I."/>
            <person name="Sasaki H."/>
            <person name="Harada T."/>
            <person name="Nakamura S."/>
            <person name="Katano Y."/>
            <person name="Narita-Yamada S."/>
            <person name="Nakazawa H."/>
            <person name="Hara H."/>
            <person name="Katayama Y."/>
            <person name="Fukuda M."/>
            <person name="Yamazaki S."/>
            <person name="Fujita N."/>
        </authorList>
    </citation>
    <scope>NUCLEOTIDE SEQUENCE [LARGE SCALE GENOMIC DNA]</scope>
    <source>
        <strain>NBRC 103272 / SYK-6</strain>
    </source>
</reference>
<reference key="3">
    <citation type="journal article" date="2014" name="Appl. Environ. Microbiol.">
        <title>Three-component O-demethylase system essential for catabolism of a lignin-derived biphenyl compound in Sphingobium sp. strain SYK-6.</title>
        <authorList>
            <person name="Yoshikata T."/>
            <person name="Suzuki K."/>
            <person name="Kamimura N."/>
            <person name="Namiki M."/>
            <person name="Hishiyama S."/>
            <person name="Araki T."/>
            <person name="Kasai D."/>
            <person name="Otsuka Y."/>
            <person name="Nakamura M."/>
            <person name="Fukuda M."/>
            <person name="Katayama Y."/>
            <person name="Masai E."/>
        </authorList>
    </citation>
    <scope>FUNCTION</scope>
    <scope>CATALYTIC ACTIVITY</scope>
    <scope>COFACTOR</scope>
    <scope>BIOPHYSICOCHEMICAL PROPERTIES</scope>
    <scope>SUBUNIT</scope>
    <scope>DISRUPTION PHENOTYPE</scope>
    <source>
        <strain>NBRC 103272 / SYK-6</strain>
    </source>
</reference>
<evidence type="ECO:0000250" key="1">
    <source>
        <dbReference type="UniProtKB" id="F1CMY8"/>
    </source>
</evidence>
<evidence type="ECO:0000255" key="2">
    <source>
        <dbReference type="PROSITE-ProRule" id="PRU00628"/>
    </source>
</evidence>
<evidence type="ECO:0000269" key="3">
    <source>
    </source>
</evidence>
<evidence type="ECO:0000269" key="4">
    <source>
    </source>
</evidence>
<evidence type="ECO:0000303" key="5">
    <source>
    </source>
</evidence>
<evidence type="ECO:0000303" key="6">
    <source>
    </source>
</evidence>
<evidence type="ECO:0000305" key="7"/>
<evidence type="ECO:0000305" key="8">
    <source>
    </source>
</evidence>
<evidence type="ECO:0000312" key="9">
    <source>
        <dbReference type="EMBL" id="BAK65452.1"/>
    </source>
</evidence>
<protein>
    <recommendedName>
        <fullName evidence="7">5,5'-dehydrodivanillate O-demethylase oxygenase subunit</fullName>
        <shortName evidence="7">DDVA O-demethylase oxygenase subunit</shortName>
        <ecNumber evidence="4">1.14.13.-</ecNumber>
    </recommendedName>
</protein>
<accession>G2IN04</accession>
<accession>Q9ZN84</accession>